<comment type="function">
    <text evidence="3 4">High affinity transporter for glutathione. Also transports tetra- and pentapeptides like the opioids leucine enkephalin (Tyr-Gly-Gly-Phe-Leu) and methionine enkephalin (Tyr-Gly-Gly_Phe-Met) across the cell membrane.</text>
</comment>
<comment type="biophysicochemical properties">
    <kinetics>
        <KM evidence="3 4">53.9 uM for glutathione</KM>
        <KM evidence="3 4">310 uM for leucine enkephalin</KM>
        <Vmax evidence="3 4">10.0 nmol/min/mg enzyme for glutathione</Vmax>
    </kinetics>
    <phDependence>
        <text evidence="3 4">Optimum pH is 5.5.</text>
    </phDependence>
</comment>
<comment type="subcellular location">
    <subcellularLocation>
        <location>Cell membrane</location>
        <topology>Multi-pass membrane protein</topology>
    </subcellularLocation>
</comment>
<comment type="miscellaneous">
    <text evidence="5">Present with 2870 molecules/cell in log phase SD medium.</text>
</comment>
<comment type="similarity">
    <text evidence="6">Belongs to the oligopeptide OPT transporter family.</text>
</comment>
<accession>P40897</accession>
<accession>D6VVY3</accession>
<sequence length="799" mass="91616">MSTIYRESDSLESEPSPTPTTIPIQINMEEEKKDAFVKNIDEDVNNLTATTDEEDRDPESQKFDRHSIQEEGLVWKGDPTYLPNSPYPEVRSAVSIEDDPTIRLNHWRTWFLTTVFVVVFAGVNQFFSLRYPSLEINFLVAQVVCYPIGRILALLPDWKCSKVPFFDLNPGPFTKKEHAVVTIAVALTSSTAYAMYILNAQGSFYNMKLNVGYQFLLVWTSQMIGYGAAGLTRRWVVNPASSIWPQTLISVSLFDSLHSRKVEKTVANGWTMPRYRFFLIVLIGSFIWYWVPGFLFTGLSYFNVILWGSKTRHNFIANTIFGTQSGLGALPITFDYTQVSQAMSGSVFATPFYVSANTYASVLIFFVIVLPCLYFTNTWYAKYMPVISGSTYDNTQNKYNVTKILNEDYSINLEKYKEYSPVFVPFSYLLSYALNFAAVIAVFVHCILYHGKDIVAKFKDRKNGGTDIHMRIYSKNYKDCPDWWYLLLQIVMIGLGFVAVCCFDTKFPAWAFVIAILISLVNFIPQGILEAMTNQHVGLNIITELICGYMLPLRPMANLLFKLYGFIVMRQGLNLSRDLKLAMYMKVSPRLIFAVQIYATIISGMVNVGVQEWMMHNIDGLCTTDQPNGFTCANGRTVFNASIIWSLPKYLFSSGRIYNPLMWFFLIGLLFPLAVYAVQWKFPKFKFAKHIHTPVFFTGPGNIPPSTPYNYSLFFAMSFCLNLIRKRWRAWFNKYNFVMGAGVEAGVAISVVIIFLCVQYPGGKLSWWGNNVWKRTYDNDYKKFYTLKKGETFGYDKWW</sequence>
<gene>
    <name type="primary">OPT1</name>
    <name type="synonym">GSH11</name>
    <name type="synonym">HGT1</name>
    <name type="ordered locus">YJL212C</name>
    <name type="ORF">HRD799</name>
    <name type="ORF">J0236</name>
</gene>
<organism>
    <name type="scientific">Saccharomyces cerevisiae (strain ATCC 204508 / S288c)</name>
    <name type="common">Baker's yeast</name>
    <dbReference type="NCBI Taxonomy" id="559292"/>
    <lineage>
        <taxon>Eukaryota</taxon>
        <taxon>Fungi</taxon>
        <taxon>Dikarya</taxon>
        <taxon>Ascomycota</taxon>
        <taxon>Saccharomycotina</taxon>
        <taxon>Saccharomycetes</taxon>
        <taxon>Saccharomycetales</taxon>
        <taxon>Saccharomycetaceae</taxon>
        <taxon>Saccharomyces</taxon>
    </lineage>
</organism>
<dbReference type="EMBL" id="Z34098">
    <property type="protein sequence ID" value="CAA83999.1"/>
    <property type="molecule type" value="Genomic_DNA"/>
</dbReference>
<dbReference type="EMBL" id="Z49487">
    <property type="protein sequence ID" value="CAA89509.1"/>
    <property type="molecule type" value="Genomic_DNA"/>
</dbReference>
<dbReference type="EMBL" id="BK006943">
    <property type="protein sequence ID" value="DAA08599.1"/>
    <property type="molecule type" value="Genomic_DNA"/>
</dbReference>
<dbReference type="PIR" id="S50773">
    <property type="entry name" value="S50773"/>
</dbReference>
<dbReference type="RefSeq" id="NP_012323.1">
    <property type="nucleotide sequence ID" value="NM_001181645.1"/>
</dbReference>
<dbReference type="BioGRID" id="33547">
    <property type="interactions" value="66"/>
</dbReference>
<dbReference type="DIP" id="DIP-5691N"/>
<dbReference type="FunCoup" id="P40897">
    <property type="interactions" value="173"/>
</dbReference>
<dbReference type="IntAct" id="P40897">
    <property type="interactions" value="2"/>
</dbReference>
<dbReference type="STRING" id="4932.YJL212C"/>
<dbReference type="TCDB" id="2.A.67.1.3">
    <property type="family name" value="the oligopeptide transporter (opt) family"/>
</dbReference>
<dbReference type="GlyCosmos" id="P40897">
    <property type="glycosylation" value="2 sites, No reported glycans"/>
</dbReference>
<dbReference type="GlyGen" id="P40897">
    <property type="glycosylation" value="3 sites"/>
</dbReference>
<dbReference type="iPTMnet" id="P40897"/>
<dbReference type="PaxDb" id="4932-YJL212C"/>
<dbReference type="PeptideAtlas" id="P40897"/>
<dbReference type="EnsemblFungi" id="YJL212C_mRNA">
    <property type="protein sequence ID" value="YJL212C"/>
    <property type="gene ID" value="YJL212C"/>
</dbReference>
<dbReference type="GeneID" id="853218"/>
<dbReference type="KEGG" id="sce:YJL212C"/>
<dbReference type="AGR" id="SGD:S000003748"/>
<dbReference type="SGD" id="S000003748">
    <property type="gene designation" value="OPT1"/>
</dbReference>
<dbReference type="VEuPathDB" id="FungiDB:YJL212C"/>
<dbReference type="eggNOG" id="KOG2262">
    <property type="taxonomic scope" value="Eukaryota"/>
</dbReference>
<dbReference type="GeneTree" id="ENSGT00940000176656"/>
<dbReference type="HOGENOM" id="CLU_004965_1_1_1"/>
<dbReference type="InParanoid" id="P40897"/>
<dbReference type="OMA" id="RWIVYPA"/>
<dbReference type="OrthoDB" id="9986677at2759"/>
<dbReference type="BioCyc" id="YEAST:G3O-31639-MONOMER"/>
<dbReference type="SABIO-RK" id="P40897"/>
<dbReference type="BioGRID-ORCS" id="853218">
    <property type="hits" value="5 hits in 10 CRISPR screens"/>
</dbReference>
<dbReference type="PRO" id="PR:P40897"/>
<dbReference type="Proteomes" id="UP000002311">
    <property type="component" value="Chromosome X"/>
</dbReference>
<dbReference type="RNAct" id="P40897">
    <property type="molecule type" value="protein"/>
</dbReference>
<dbReference type="GO" id="GO:0005886">
    <property type="term" value="C:plasma membrane"/>
    <property type="evidence" value="ECO:0000314"/>
    <property type="project" value="SGD"/>
</dbReference>
<dbReference type="GO" id="GO:0035673">
    <property type="term" value="F:oligopeptide transmembrane transporter activity"/>
    <property type="evidence" value="ECO:0000315"/>
    <property type="project" value="SGD"/>
</dbReference>
<dbReference type="GO" id="GO:0006857">
    <property type="term" value="P:oligopeptide transport"/>
    <property type="evidence" value="ECO:0000314"/>
    <property type="project" value="SGD"/>
</dbReference>
<dbReference type="GO" id="GO:0015031">
    <property type="term" value="P:protein transport"/>
    <property type="evidence" value="ECO:0007669"/>
    <property type="project" value="UniProtKB-KW"/>
</dbReference>
<dbReference type="InterPro" id="IPR004648">
    <property type="entry name" value="Oligpept_transpt"/>
</dbReference>
<dbReference type="InterPro" id="IPR004813">
    <property type="entry name" value="OPT"/>
</dbReference>
<dbReference type="NCBIfam" id="TIGR00727">
    <property type="entry name" value="ISP4_OPT"/>
    <property type="match status" value="1"/>
</dbReference>
<dbReference type="NCBIfam" id="TIGR00728">
    <property type="entry name" value="OPT_sfam"/>
    <property type="match status" value="1"/>
</dbReference>
<dbReference type="PANTHER" id="PTHR22601">
    <property type="entry name" value="ISP4 LIKE PROTEIN"/>
    <property type="match status" value="1"/>
</dbReference>
<dbReference type="Pfam" id="PF03169">
    <property type="entry name" value="OPT"/>
    <property type="match status" value="1"/>
</dbReference>
<protein>
    <recommendedName>
        <fullName>Oligopeptide transporter 1</fullName>
    </recommendedName>
    <alternativeName>
        <fullName>High affinity glutathione transporter 1</fullName>
    </alternativeName>
</protein>
<feature type="chain" id="PRO_0000213788" description="Oligopeptide transporter 1">
    <location>
        <begin position="1"/>
        <end position="799"/>
    </location>
</feature>
<feature type="topological domain" description="Extracellular" evidence="1">
    <location>
        <begin position="1"/>
        <end position="108"/>
    </location>
</feature>
<feature type="transmembrane region" description="Helical" evidence="1">
    <location>
        <begin position="109"/>
        <end position="129"/>
    </location>
</feature>
<feature type="topological domain" description="Cytoplasmic" evidence="1">
    <location>
        <begin position="130"/>
        <end position="135"/>
    </location>
</feature>
<feature type="transmembrane region" description="Helical" evidence="1">
    <location>
        <begin position="136"/>
        <end position="156"/>
    </location>
</feature>
<feature type="topological domain" description="Extracellular" evidence="1">
    <location>
        <begin position="157"/>
        <end position="177"/>
    </location>
</feature>
<feature type="transmembrane region" description="Helical" evidence="1">
    <location>
        <begin position="178"/>
        <end position="198"/>
    </location>
</feature>
<feature type="topological domain" description="Cytoplasmic" evidence="1">
    <location>
        <begin position="199"/>
        <end position="210"/>
    </location>
</feature>
<feature type="transmembrane region" description="Helical" evidence="1">
    <location>
        <begin position="211"/>
        <end position="231"/>
    </location>
</feature>
<feature type="topological domain" description="Extracellular" evidence="1">
    <location>
        <begin position="232"/>
        <end position="276"/>
    </location>
</feature>
<feature type="transmembrane region" description="Helical" evidence="1">
    <location>
        <begin position="277"/>
        <end position="297"/>
    </location>
</feature>
<feature type="topological domain" description="Cytoplasmic" evidence="1">
    <location>
        <begin position="298"/>
        <end position="313"/>
    </location>
</feature>
<feature type="transmembrane region" description="Helical" evidence="1">
    <location>
        <begin position="314"/>
        <end position="334"/>
    </location>
</feature>
<feature type="topological domain" description="Extracellular" evidence="1">
    <location>
        <begin position="335"/>
        <end position="359"/>
    </location>
</feature>
<feature type="transmembrane region" description="Helical" evidence="1">
    <location>
        <begin position="360"/>
        <end position="380"/>
    </location>
</feature>
<feature type="topological domain" description="Cytoplasmic" evidence="1">
    <location>
        <begin position="381"/>
        <end position="428"/>
    </location>
</feature>
<feature type="transmembrane region" description="Helical" evidence="1">
    <location>
        <begin position="429"/>
        <end position="449"/>
    </location>
</feature>
<feature type="topological domain" description="Extracellular" evidence="1">
    <location>
        <begin position="450"/>
        <end position="482"/>
    </location>
</feature>
<feature type="transmembrane region" description="Helical" evidence="1">
    <location>
        <begin position="483"/>
        <end position="503"/>
    </location>
</feature>
<feature type="topological domain" description="Cytoplasmic" evidence="1">
    <location>
        <begin position="504"/>
        <end position="508"/>
    </location>
</feature>
<feature type="transmembrane region" description="Helical" evidence="1">
    <location>
        <begin position="509"/>
        <end position="529"/>
    </location>
</feature>
<feature type="topological domain" description="Extracellular" evidence="1">
    <location>
        <begin position="530"/>
        <end position="540"/>
    </location>
</feature>
<feature type="transmembrane region" description="Helical" evidence="1">
    <location>
        <begin position="541"/>
        <end position="561"/>
    </location>
</feature>
<feature type="topological domain" description="Cytoplasmic" evidence="1">
    <location>
        <begin position="562"/>
        <end position="590"/>
    </location>
</feature>
<feature type="transmembrane region" description="Helical" evidence="1">
    <location>
        <begin position="591"/>
        <end position="611"/>
    </location>
</feature>
<feature type="topological domain" description="Extracellular" evidence="1">
    <location>
        <begin position="612"/>
        <end position="659"/>
    </location>
</feature>
<feature type="transmembrane region" description="Helical" evidence="1">
    <location>
        <begin position="660"/>
        <end position="680"/>
    </location>
</feature>
<feature type="topological domain" description="Cytoplasmic" evidence="1">
    <location>
        <begin position="681"/>
        <end position="736"/>
    </location>
</feature>
<feature type="transmembrane region" description="Helical" evidence="1">
    <location>
        <begin position="737"/>
        <end position="757"/>
    </location>
</feature>
<feature type="topological domain" description="Extracellular" evidence="1">
    <location>
        <begin position="758"/>
        <end position="799"/>
    </location>
</feature>
<feature type="region of interest" description="Disordered" evidence="2">
    <location>
        <begin position="1"/>
        <end position="26"/>
    </location>
</feature>
<feature type="region of interest" description="Disordered" evidence="2">
    <location>
        <begin position="43"/>
        <end position="64"/>
    </location>
</feature>
<feature type="compositionally biased region" description="Low complexity" evidence="2">
    <location>
        <begin position="13"/>
        <end position="26"/>
    </location>
</feature>
<feature type="modified residue" description="Phosphothreonine" evidence="7">
    <location>
        <position position="48"/>
    </location>
</feature>
<feature type="modified residue" description="Phosphothreonine" evidence="7">
    <location>
        <position position="50"/>
    </location>
</feature>
<feature type="modified residue" description="Phosphothreonine" evidence="7">
    <location>
        <position position="51"/>
    </location>
</feature>
<feature type="glycosylation site" description="N-linked (GlcNAc...) asparagine" evidence="1">
    <location>
        <position position="46"/>
    </location>
</feature>
<feature type="glycosylation site" description="N-linked (GlcNAc...) asparagine" evidence="1">
    <location>
        <position position="640"/>
    </location>
</feature>
<keyword id="KW-1003">Cell membrane</keyword>
<keyword id="KW-0325">Glycoprotein</keyword>
<keyword id="KW-0472">Membrane</keyword>
<keyword id="KW-0571">Peptide transport</keyword>
<keyword id="KW-0597">Phosphoprotein</keyword>
<keyword id="KW-0653">Protein transport</keyword>
<keyword id="KW-1185">Reference proteome</keyword>
<keyword id="KW-0812">Transmembrane</keyword>
<keyword id="KW-1133">Transmembrane helix</keyword>
<keyword id="KW-0813">Transport</keyword>
<proteinExistence type="evidence at protein level"/>
<evidence type="ECO:0000255" key="1"/>
<evidence type="ECO:0000256" key="2">
    <source>
        <dbReference type="SAM" id="MobiDB-lite"/>
    </source>
</evidence>
<evidence type="ECO:0000269" key="3">
    <source>
    </source>
</evidence>
<evidence type="ECO:0000269" key="4">
    <source>
    </source>
</evidence>
<evidence type="ECO:0000269" key="5">
    <source>
    </source>
</evidence>
<evidence type="ECO:0000305" key="6"/>
<evidence type="ECO:0007744" key="7">
    <source>
    </source>
</evidence>
<name>OPT1_YEAST</name>
<reference key="1">
    <citation type="journal article" date="1994" name="Yeast">
        <title>Sequence analysis of a 40.2 kb DNA fragment located near the left telomere of yeast chromosome X.</title>
        <authorList>
            <person name="Vandenbol M."/>
            <person name="Durand P."/>
            <person name="Bolle P.-A."/>
            <person name="Dion C."/>
            <person name="Portetelle D."/>
            <person name="Hilger F."/>
        </authorList>
    </citation>
    <scope>NUCLEOTIDE SEQUENCE [GENOMIC DNA]</scope>
    <source>
        <strain>ATCC 204508 / S288c</strain>
    </source>
</reference>
<reference key="2">
    <citation type="journal article" date="1996" name="EMBO J.">
        <title>Complete nucleotide sequence of Saccharomyces cerevisiae chromosome X.</title>
        <authorList>
            <person name="Galibert F."/>
            <person name="Alexandraki D."/>
            <person name="Baur A."/>
            <person name="Boles E."/>
            <person name="Chalwatzis N."/>
            <person name="Chuat J.-C."/>
            <person name="Coster F."/>
            <person name="Cziepluch C."/>
            <person name="de Haan M."/>
            <person name="Domdey H."/>
            <person name="Durand P."/>
            <person name="Entian K.-D."/>
            <person name="Gatius M."/>
            <person name="Goffeau A."/>
            <person name="Grivell L.A."/>
            <person name="Hennemann A."/>
            <person name="Herbert C.J."/>
            <person name="Heumann K."/>
            <person name="Hilger F."/>
            <person name="Hollenberg C.P."/>
            <person name="Huang M.-E."/>
            <person name="Jacq C."/>
            <person name="Jauniaux J.-C."/>
            <person name="Katsoulou C."/>
            <person name="Kirchrath L."/>
            <person name="Kleine K."/>
            <person name="Kordes E."/>
            <person name="Koetter P."/>
            <person name="Liebl S."/>
            <person name="Louis E.J."/>
            <person name="Manus V."/>
            <person name="Mewes H.-W."/>
            <person name="Miosga T."/>
            <person name="Obermaier B."/>
            <person name="Perea J."/>
            <person name="Pohl T.M."/>
            <person name="Portetelle D."/>
            <person name="Pujol A."/>
            <person name="Purnelle B."/>
            <person name="Ramezani Rad M."/>
            <person name="Rasmussen S.W."/>
            <person name="Rose M."/>
            <person name="Rossau R."/>
            <person name="Schaaff-Gerstenschlaeger I."/>
            <person name="Smits P.H.M."/>
            <person name="Scarcez T."/>
            <person name="Soriano N."/>
            <person name="To Van D."/>
            <person name="Tzermia M."/>
            <person name="Van Broekhoven A."/>
            <person name="Vandenbol M."/>
            <person name="Wedler H."/>
            <person name="von Wettstein D."/>
            <person name="Wambutt R."/>
            <person name="Zagulski M."/>
            <person name="Zollner A."/>
            <person name="Karpfinger-Hartl L."/>
        </authorList>
    </citation>
    <scope>NUCLEOTIDE SEQUENCE [LARGE SCALE GENOMIC DNA]</scope>
    <source>
        <strain>ATCC 204508 / S288c</strain>
    </source>
</reference>
<reference key="3">
    <citation type="journal article" date="2014" name="G3 (Bethesda)">
        <title>The reference genome sequence of Saccharomyces cerevisiae: Then and now.</title>
        <authorList>
            <person name="Engel S.R."/>
            <person name="Dietrich F.S."/>
            <person name="Fisk D.G."/>
            <person name="Binkley G."/>
            <person name="Balakrishnan R."/>
            <person name="Costanzo M.C."/>
            <person name="Dwight S.S."/>
            <person name="Hitz B.C."/>
            <person name="Karra K."/>
            <person name="Nash R.S."/>
            <person name="Weng S."/>
            <person name="Wong E.D."/>
            <person name="Lloyd P."/>
            <person name="Skrzypek M.S."/>
            <person name="Miyasato S.R."/>
            <person name="Simison M."/>
            <person name="Cherry J.M."/>
        </authorList>
    </citation>
    <scope>GENOME REANNOTATION</scope>
    <source>
        <strain>ATCC 204508 / S288c</strain>
    </source>
</reference>
<reference key="4">
    <citation type="journal article" date="2000" name="J. Biol. Chem.">
        <title>Enkephalins are transported by a novel eukaryotic peptide uptake system.</title>
        <authorList>
            <person name="Hauser M."/>
            <person name="Donhardt A.M."/>
            <person name="Barnes D."/>
            <person name="Naider F."/>
            <person name="Becker J.M."/>
        </authorList>
    </citation>
    <scope>FUNCTION</scope>
    <scope>BIOPHYSICOCHEMICAL PROPERTIES</scope>
</reference>
<reference key="5">
    <citation type="journal article" date="2000" name="J. Biol. Chem.">
        <title>Hgt1p, a high affinity glutathione transporter from the yeast Saccharomyces cerevisiae.</title>
        <authorList>
            <person name="Bourbouloux A."/>
            <person name="Shahi P."/>
            <person name="Chakladar A."/>
            <person name="Delrot S."/>
            <person name="Bachhawat A.K."/>
        </authorList>
    </citation>
    <scope>FUNCTION</scope>
    <scope>BIOPHYSICOCHEMICAL PROPERTIES</scope>
</reference>
<reference key="6">
    <citation type="journal article" date="2003" name="Nature">
        <title>Global analysis of protein expression in yeast.</title>
        <authorList>
            <person name="Ghaemmaghami S."/>
            <person name="Huh W.-K."/>
            <person name="Bower K."/>
            <person name="Howson R.W."/>
            <person name="Belle A."/>
            <person name="Dephoure N."/>
            <person name="O'Shea E.K."/>
            <person name="Weissman J.S."/>
        </authorList>
    </citation>
    <scope>LEVEL OF PROTEIN EXPRESSION [LARGE SCALE ANALYSIS]</scope>
</reference>
<reference key="7">
    <citation type="journal article" date="2006" name="Proc. Natl. Acad. Sci. U.S.A.">
        <title>A global topology map of the Saccharomyces cerevisiae membrane proteome.</title>
        <authorList>
            <person name="Kim H."/>
            <person name="Melen K."/>
            <person name="Oesterberg M."/>
            <person name="von Heijne G."/>
        </authorList>
    </citation>
    <scope>TOPOLOGY [LARGE SCALE ANALYSIS]</scope>
    <source>
        <strain>ATCC 208353 / W303-1A</strain>
    </source>
</reference>
<reference key="8">
    <citation type="journal article" date="2009" name="Science">
        <title>Global analysis of Cdk1 substrate phosphorylation sites provides insights into evolution.</title>
        <authorList>
            <person name="Holt L.J."/>
            <person name="Tuch B.B."/>
            <person name="Villen J."/>
            <person name="Johnson A.D."/>
            <person name="Gygi S.P."/>
            <person name="Morgan D.O."/>
        </authorList>
    </citation>
    <scope>PHOSPHORYLATION [LARGE SCALE ANALYSIS] AT THR-48; THR-50 AND THR-51</scope>
    <scope>IDENTIFICATION BY MASS SPECTROMETRY [LARGE SCALE ANALYSIS]</scope>
</reference>